<organism>
    <name type="scientific">Halothermothrix orenii (strain H 168 / OCM 544 / DSM 9562)</name>
    <dbReference type="NCBI Taxonomy" id="373903"/>
    <lineage>
        <taxon>Bacteria</taxon>
        <taxon>Bacillati</taxon>
        <taxon>Bacillota</taxon>
        <taxon>Clostridia</taxon>
        <taxon>Halanaerobiales</taxon>
        <taxon>Halothermotrichaceae</taxon>
        <taxon>Halothermothrix</taxon>
    </lineage>
</organism>
<gene>
    <name evidence="1" type="primary">recF</name>
    <name type="ordered locus">Hore_00040</name>
</gene>
<accession>B8CZN7</accession>
<protein>
    <recommendedName>
        <fullName evidence="1">DNA replication and repair protein RecF</fullName>
    </recommendedName>
</protein>
<reference key="1">
    <citation type="journal article" date="2009" name="PLoS ONE">
        <title>Genome analysis of the anaerobic thermohalophilic bacterium Halothermothrix orenii.</title>
        <authorList>
            <person name="Mavromatis K."/>
            <person name="Ivanova N."/>
            <person name="Anderson I."/>
            <person name="Lykidis A."/>
            <person name="Hooper S.D."/>
            <person name="Sun H."/>
            <person name="Kunin V."/>
            <person name="Lapidus A."/>
            <person name="Hugenholtz P."/>
            <person name="Patel B."/>
            <person name="Kyrpides N.C."/>
        </authorList>
    </citation>
    <scope>NUCLEOTIDE SEQUENCE [LARGE SCALE GENOMIC DNA]</scope>
    <source>
        <strain>H 168 / OCM 544 / DSM 9562</strain>
    </source>
</reference>
<comment type="function">
    <text evidence="1">The RecF protein is involved in DNA metabolism; it is required for DNA replication and normal SOS inducibility. RecF binds preferentially to single-stranded, linear DNA. It also seems to bind ATP.</text>
</comment>
<comment type="subcellular location">
    <subcellularLocation>
        <location evidence="1">Cytoplasm</location>
    </subcellularLocation>
</comment>
<comment type="similarity">
    <text evidence="1">Belongs to the RecF family.</text>
</comment>
<evidence type="ECO:0000255" key="1">
    <source>
        <dbReference type="HAMAP-Rule" id="MF_00365"/>
    </source>
</evidence>
<dbReference type="EMBL" id="CP001098">
    <property type="protein sequence ID" value="ACL68767.1"/>
    <property type="molecule type" value="Genomic_DNA"/>
</dbReference>
<dbReference type="RefSeq" id="WP_012634966.1">
    <property type="nucleotide sequence ID" value="NC_011899.1"/>
</dbReference>
<dbReference type="SMR" id="B8CZN7"/>
<dbReference type="STRING" id="373903.Hore_00040"/>
<dbReference type="KEGG" id="hor:Hore_00040"/>
<dbReference type="eggNOG" id="COG1195">
    <property type="taxonomic scope" value="Bacteria"/>
</dbReference>
<dbReference type="HOGENOM" id="CLU_040267_0_1_9"/>
<dbReference type="OrthoDB" id="9803889at2"/>
<dbReference type="Proteomes" id="UP000000719">
    <property type="component" value="Chromosome"/>
</dbReference>
<dbReference type="GO" id="GO:0005737">
    <property type="term" value="C:cytoplasm"/>
    <property type="evidence" value="ECO:0007669"/>
    <property type="project" value="UniProtKB-SubCell"/>
</dbReference>
<dbReference type="GO" id="GO:0005524">
    <property type="term" value="F:ATP binding"/>
    <property type="evidence" value="ECO:0007669"/>
    <property type="project" value="UniProtKB-UniRule"/>
</dbReference>
<dbReference type="GO" id="GO:0003697">
    <property type="term" value="F:single-stranded DNA binding"/>
    <property type="evidence" value="ECO:0007669"/>
    <property type="project" value="UniProtKB-UniRule"/>
</dbReference>
<dbReference type="GO" id="GO:0006260">
    <property type="term" value="P:DNA replication"/>
    <property type="evidence" value="ECO:0007669"/>
    <property type="project" value="UniProtKB-UniRule"/>
</dbReference>
<dbReference type="GO" id="GO:0000731">
    <property type="term" value="P:DNA synthesis involved in DNA repair"/>
    <property type="evidence" value="ECO:0007669"/>
    <property type="project" value="TreeGrafter"/>
</dbReference>
<dbReference type="GO" id="GO:0006302">
    <property type="term" value="P:double-strand break repair"/>
    <property type="evidence" value="ECO:0007669"/>
    <property type="project" value="TreeGrafter"/>
</dbReference>
<dbReference type="GO" id="GO:0009432">
    <property type="term" value="P:SOS response"/>
    <property type="evidence" value="ECO:0007669"/>
    <property type="project" value="UniProtKB-UniRule"/>
</dbReference>
<dbReference type="CDD" id="cd03242">
    <property type="entry name" value="ABC_RecF"/>
    <property type="match status" value="1"/>
</dbReference>
<dbReference type="Gene3D" id="3.40.50.300">
    <property type="entry name" value="P-loop containing nucleotide triphosphate hydrolases"/>
    <property type="match status" value="1"/>
</dbReference>
<dbReference type="Gene3D" id="1.20.1050.90">
    <property type="entry name" value="RecF/RecN/SMC, N-terminal domain"/>
    <property type="match status" value="1"/>
</dbReference>
<dbReference type="HAMAP" id="MF_00365">
    <property type="entry name" value="RecF"/>
    <property type="match status" value="1"/>
</dbReference>
<dbReference type="InterPro" id="IPR001238">
    <property type="entry name" value="DNA-binding_RecF"/>
</dbReference>
<dbReference type="InterPro" id="IPR018078">
    <property type="entry name" value="DNA-binding_RecF_CS"/>
</dbReference>
<dbReference type="InterPro" id="IPR027417">
    <property type="entry name" value="P-loop_NTPase"/>
</dbReference>
<dbReference type="InterPro" id="IPR003395">
    <property type="entry name" value="RecF/RecN/SMC_N"/>
</dbReference>
<dbReference type="InterPro" id="IPR042174">
    <property type="entry name" value="RecF_2"/>
</dbReference>
<dbReference type="NCBIfam" id="TIGR00611">
    <property type="entry name" value="recf"/>
    <property type="match status" value="1"/>
</dbReference>
<dbReference type="PANTHER" id="PTHR32182">
    <property type="entry name" value="DNA REPLICATION AND REPAIR PROTEIN RECF"/>
    <property type="match status" value="1"/>
</dbReference>
<dbReference type="PANTHER" id="PTHR32182:SF0">
    <property type="entry name" value="DNA REPLICATION AND REPAIR PROTEIN RECF"/>
    <property type="match status" value="1"/>
</dbReference>
<dbReference type="Pfam" id="PF02463">
    <property type="entry name" value="SMC_N"/>
    <property type="match status" value="1"/>
</dbReference>
<dbReference type="SUPFAM" id="SSF52540">
    <property type="entry name" value="P-loop containing nucleoside triphosphate hydrolases"/>
    <property type="match status" value="1"/>
</dbReference>
<dbReference type="PROSITE" id="PS00617">
    <property type="entry name" value="RECF_1"/>
    <property type="match status" value="1"/>
</dbReference>
<dbReference type="PROSITE" id="PS00618">
    <property type="entry name" value="RECF_2"/>
    <property type="match status" value="1"/>
</dbReference>
<keyword id="KW-0067">ATP-binding</keyword>
<keyword id="KW-0963">Cytoplasm</keyword>
<keyword id="KW-0227">DNA damage</keyword>
<keyword id="KW-0234">DNA repair</keyword>
<keyword id="KW-0235">DNA replication</keyword>
<keyword id="KW-0238">DNA-binding</keyword>
<keyword id="KW-0547">Nucleotide-binding</keyword>
<keyword id="KW-1185">Reference proteome</keyword>
<keyword id="KW-0742">SOS response</keyword>
<proteinExistence type="inferred from homology"/>
<sequence length="375" mass="43893">MYIDRIYLKDFRNLTENLIKLDNRLNVFVGLNGQGKTNFLEAVYLMGTASSHRTNADRELIRWNQDRAVVQLYLVKRDEKLKISLEINKKVKKLEINDVPQERVSELLGNLNVVLFSPEDLKLVKEGPHFRRKFLDTELSQVKPYYHYLLKKYNHILSQRNNLLKELMTGNKSDTTLLEVWDEQLVEIGAKIIQNRIEVIDKLKILARLSHRQITDGLENITLSYESSLSDRIEEKELEEIKIIFRNKLVNNRNEEITRGYTLAGPQRDDLKITMNGIDIRKYGSQGQQRTAALSLKLAELEFMKSEQGEYPVLLLDDVFSELDNKRRHRLIDIMAHRVQTFITATDFFNLNEINTPSIKVFKVRNGLITRYKSL</sequence>
<name>RECF_HALOH</name>
<feature type="chain" id="PRO_1000133691" description="DNA replication and repair protein RecF">
    <location>
        <begin position="1"/>
        <end position="375"/>
    </location>
</feature>
<feature type="binding site" evidence="1">
    <location>
        <begin position="30"/>
        <end position="37"/>
    </location>
    <ligand>
        <name>ATP</name>
        <dbReference type="ChEBI" id="CHEBI:30616"/>
    </ligand>
</feature>